<proteinExistence type="inferred from homology"/>
<dbReference type="EC" id="3.5.1.108" evidence="1"/>
<dbReference type="EMBL" id="BA000021">
    <property type="protein sequence ID" value="BAC24347.1"/>
    <property type="molecule type" value="Genomic_DNA"/>
</dbReference>
<dbReference type="SMR" id="Q8D300"/>
<dbReference type="STRING" id="36870.gene:10368689"/>
<dbReference type="KEGG" id="wbr:lpxC"/>
<dbReference type="eggNOG" id="COG0774">
    <property type="taxonomic scope" value="Bacteria"/>
</dbReference>
<dbReference type="HOGENOM" id="CLU_046528_1_0_6"/>
<dbReference type="OrthoDB" id="9802746at2"/>
<dbReference type="UniPathway" id="UPA00359">
    <property type="reaction ID" value="UER00478"/>
</dbReference>
<dbReference type="Proteomes" id="UP000000562">
    <property type="component" value="Chromosome"/>
</dbReference>
<dbReference type="GO" id="GO:0016020">
    <property type="term" value="C:membrane"/>
    <property type="evidence" value="ECO:0007669"/>
    <property type="project" value="GOC"/>
</dbReference>
<dbReference type="GO" id="GO:0046872">
    <property type="term" value="F:metal ion binding"/>
    <property type="evidence" value="ECO:0007669"/>
    <property type="project" value="UniProtKB-KW"/>
</dbReference>
<dbReference type="GO" id="GO:0103117">
    <property type="term" value="F:UDP-3-O-acyl-N-acetylglucosamine deacetylase activity"/>
    <property type="evidence" value="ECO:0007669"/>
    <property type="project" value="UniProtKB-UniRule"/>
</dbReference>
<dbReference type="GO" id="GO:0009245">
    <property type="term" value="P:lipid A biosynthetic process"/>
    <property type="evidence" value="ECO:0007669"/>
    <property type="project" value="UniProtKB-UniRule"/>
</dbReference>
<dbReference type="Gene3D" id="3.30.230.20">
    <property type="entry name" value="lpxc deacetylase, domain 1"/>
    <property type="match status" value="1"/>
</dbReference>
<dbReference type="Gene3D" id="3.30.1700.10">
    <property type="entry name" value="lpxc deacetylase, domain 2"/>
    <property type="match status" value="1"/>
</dbReference>
<dbReference type="HAMAP" id="MF_00388">
    <property type="entry name" value="LpxC"/>
    <property type="match status" value="1"/>
</dbReference>
<dbReference type="InterPro" id="IPR020568">
    <property type="entry name" value="Ribosomal_Su5_D2-typ_SF"/>
</dbReference>
<dbReference type="InterPro" id="IPR004463">
    <property type="entry name" value="UDP-acyl_GlcNac_deAcase"/>
</dbReference>
<dbReference type="InterPro" id="IPR011334">
    <property type="entry name" value="UDP-acyl_GlcNac_deAcase_C"/>
</dbReference>
<dbReference type="InterPro" id="IPR015870">
    <property type="entry name" value="UDP-acyl_N-AcGlcN_deAcase_N"/>
</dbReference>
<dbReference type="NCBIfam" id="TIGR00325">
    <property type="entry name" value="lpxC"/>
    <property type="match status" value="1"/>
</dbReference>
<dbReference type="PANTHER" id="PTHR33694">
    <property type="entry name" value="UDP-3-O-ACYL-N-ACETYLGLUCOSAMINE DEACETYLASE 1, MITOCHONDRIAL-RELATED"/>
    <property type="match status" value="1"/>
</dbReference>
<dbReference type="PANTHER" id="PTHR33694:SF1">
    <property type="entry name" value="UDP-3-O-ACYL-N-ACETYLGLUCOSAMINE DEACETYLASE 1, MITOCHONDRIAL-RELATED"/>
    <property type="match status" value="1"/>
</dbReference>
<dbReference type="Pfam" id="PF03331">
    <property type="entry name" value="LpxC"/>
    <property type="match status" value="1"/>
</dbReference>
<dbReference type="SUPFAM" id="SSF54211">
    <property type="entry name" value="Ribosomal protein S5 domain 2-like"/>
    <property type="match status" value="2"/>
</dbReference>
<gene>
    <name evidence="1" type="primary">lpxC</name>
    <name type="ordered locus">WIGBR2010</name>
</gene>
<evidence type="ECO:0000255" key="1">
    <source>
        <dbReference type="HAMAP-Rule" id="MF_00388"/>
    </source>
</evidence>
<keyword id="KW-0378">Hydrolase</keyword>
<keyword id="KW-0441">Lipid A biosynthesis</keyword>
<keyword id="KW-0444">Lipid biosynthesis</keyword>
<keyword id="KW-0443">Lipid metabolism</keyword>
<keyword id="KW-0479">Metal-binding</keyword>
<keyword id="KW-1185">Reference proteome</keyword>
<keyword id="KW-0862">Zinc</keyword>
<feature type="chain" id="PRO_1000122831" description="UDP-3-O-acyl-N-acetylglucosamine deacetylase">
    <location>
        <begin position="1"/>
        <end position="298"/>
    </location>
</feature>
<feature type="active site" description="Proton donor" evidence="1">
    <location>
        <position position="266"/>
    </location>
</feature>
<feature type="binding site" evidence="1">
    <location>
        <position position="79"/>
    </location>
    <ligand>
        <name>Zn(2+)</name>
        <dbReference type="ChEBI" id="CHEBI:29105"/>
    </ligand>
</feature>
<feature type="binding site" evidence="1">
    <location>
        <position position="239"/>
    </location>
    <ligand>
        <name>Zn(2+)</name>
        <dbReference type="ChEBI" id="CHEBI:29105"/>
    </ligand>
</feature>
<feature type="binding site" evidence="1">
    <location>
        <position position="243"/>
    </location>
    <ligand>
        <name>Zn(2+)</name>
        <dbReference type="ChEBI" id="CHEBI:29105"/>
    </ligand>
</feature>
<protein>
    <recommendedName>
        <fullName evidence="1">UDP-3-O-acyl-N-acetylglucosamine deacetylase</fullName>
        <shortName evidence="1">UDP-3-O-acyl-GlcNAc deacetylase</shortName>
        <ecNumber evidence="1">3.5.1.108</ecNumber>
    </recommendedName>
    <alternativeName>
        <fullName evidence="1">UDP-3-O-[R-3-hydroxymyristoyl]-N-acetylglucosamine deacetylase</fullName>
    </alternativeName>
</protein>
<name>LPXC_WIGBR</name>
<comment type="function">
    <text evidence="1">Catalyzes the hydrolysis of UDP-3-O-myristoyl-N-acetylglucosamine to form UDP-3-O-myristoylglucosamine and acetate, the committed step in lipid A biosynthesis.</text>
</comment>
<comment type="catalytic activity">
    <reaction evidence="1">
        <text>a UDP-3-O-[(3R)-3-hydroxyacyl]-N-acetyl-alpha-D-glucosamine + H2O = a UDP-3-O-[(3R)-3-hydroxyacyl]-alpha-D-glucosamine + acetate</text>
        <dbReference type="Rhea" id="RHEA:67816"/>
        <dbReference type="ChEBI" id="CHEBI:15377"/>
        <dbReference type="ChEBI" id="CHEBI:30089"/>
        <dbReference type="ChEBI" id="CHEBI:137740"/>
        <dbReference type="ChEBI" id="CHEBI:173225"/>
        <dbReference type="EC" id="3.5.1.108"/>
    </reaction>
</comment>
<comment type="cofactor">
    <cofactor evidence="1">
        <name>Zn(2+)</name>
        <dbReference type="ChEBI" id="CHEBI:29105"/>
    </cofactor>
</comment>
<comment type="pathway">
    <text evidence="1">Glycolipid biosynthesis; lipid IV(A) biosynthesis; lipid IV(A) from (3R)-3-hydroxytetradecanoyl-[acyl-carrier-protein] and UDP-N-acetyl-alpha-D-glucosamine: step 2/6.</text>
</comment>
<comment type="similarity">
    <text evidence="1">Belongs to the LpxC family.</text>
</comment>
<accession>Q8D300</accession>
<organism>
    <name type="scientific">Wigglesworthia glossinidia brevipalpis</name>
    <dbReference type="NCBI Taxonomy" id="36870"/>
    <lineage>
        <taxon>Bacteria</taxon>
        <taxon>Pseudomonadati</taxon>
        <taxon>Pseudomonadota</taxon>
        <taxon>Gammaproteobacteria</taxon>
        <taxon>Enterobacterales</taxon>
        <taxon>Erwiniaceae</taxon>
        <taxon>Wigglesworthia</taxon>
    </lineage>
</organism>
<sequence>MIKQSTLKKSINIKGFGLHSGKPVKLTLNPAPVNSGIIYRRIDISPPVEFISNVNLIKNTNLCTSLENKNGVNISTVEHLSAAICGLGIDNIIIEITSSEIPIMDGSSWPFVDIIINSSGIKTLEHDKKFIYIKKIVRVEKEDKWIEVTPSNKFTLDFSIDFDHPVISSTSQNFFFTFSVNSFINQISKARTFGFLRDIKYLQSNKLALGGNCNCAIVIGNKRILNKEGLRFSNEFIRHKILDAIGDFFVSGYNIVGAFKAFKPGHNMHYMLLKKIFRNKNTWEFSTMKNNHSYVNNF</sequence>
<reference key="1">
    <citation type="journal article" date="2002" name="Nat. Genet.">
        <title>Genome sequence of the endocellular obligate symbiont of tsetse flies, Wigglesworthia glossinidia.</title>
        <authorList>
            <person name="Akman L."/>
            <person name="Yamashita A."/>
            <person name="Watanabe H."/>
            <person name="Oshima K."/>
            <person name="Shiba T."/>
            <person name="Hattori M."/>
            <person name="Aksoy S."/>
        </authorList>
    </citation>
    <scope>NUCLEOTIDE SEQUENCE [LARGE SCALE GENOMIC DNA]</scope>
</reference>